<reference key="1">
    <citation type="journal article" date="2000" name="Proc. Natl. Acad. Sci. U.S.A.">
        <title>Large exons encoding multiple ectodomains are a characteristic feature of protocadherin genes.</title>
        <authorList>
            <person name="Wu Q."/>
            <person name="Maniatis T."/>
        </authorList>
    </citation>
    <scope>NUCLEOTIDE SEQUENCE [MRNA] (ISOFORM 1)</scope>
</reference>
<reference key="2">
    <citation type="journal article" date="2006" name="Nature">
        <title>The DNA sequence, annotation and analysis of human chromosome 3.</title>
        <authorList>
            <person name="Muzny D.M."/>
            <person name="Scherer S.E."/>
            <person name="Kaul R."/>
            <person name="Wang J."/>
            <person name="Yu J."/>
            <person name="Sudbrak R."/>
            <person name="Buhay C.J."/>
            <person name="Chen R."/>
            <person name="Cree A."/>
            <person name="Ding Y."/>
            <person name="Dugan-Rocha S."/>
            <person name="Gill R."/>
            <person name="Gunaratne P."/>
            <person name="Harris R.A."/>
            <person name="Hawes A.C."/>
            <person name="Hernandez J."/>
            <person name="Hodgson A.V."/>
            <person name="Hume J."/>
            <person name="Jackson A."/>
            <person name="Khan Z.M."/>
            <person name="Kovar-Smith C."/>
            <person name="Lewis L.R."/>
            <person name="Lozado R.J."/>
            <person name="Metzker M.L."/>
            <person name="Milosavljevic A."/>
            <person name="Miner G.R."/>
            <person name="Morgan M.B."/>
            <person name="Nazareth L.V."/>
            <person name="Scott G."/>
            <person name="Sodergren E."/>
            <person name="Song X.-Z."/>
            <person name="Steffen D."/>
            <person name="Wei S."/>
            <person name="Wheeler D.A."/>
            <person name="Wright M.W."/>
            <person name="Worley K.C."/>
            <person name="Yuan Y."/>
            <person name="Zhang Z."/>
            <person name="Adams C.Q."/>
            <person name="Ansari-Lari M.A."/>
            <person name="Ayele M."/>
            <person name="Brown M.J."/>
            <person name="Chen G."/>
            <person name="Chen Z."/>
            <person name="Clendenning J."/>
            <person name="Clerc-Blankenburg K.P."/>
            <person name="Chen R."/>
            <person name="Chen Z."/>
            <person name="Davis C."/>
            <person name="Delgado O."/>
            <person name="Dinh H.H."/>
            <person name="Dong W."/>
            <person name="Draper H."/>
            <person name="Ernst S."/>
            <person name="Fu G."/>
            <person name="Gonzalez-Garay M.L."/>
            <person name="Garcia D.K."/>
            <person name="Gillett W."/>
            <person name="Gu J."/>
            <person name="Hao B."/>
            <person name="Haugen E."/>
            <person name="Havlak P."/>
            <person name="He X."/>
            <person name="Hennig S."/>
            <person name="Hu S."/>
            <person name="Huang W."/>
            <person name="Jackson L.R."/>
            <person name="Jacob L.S."/>
            <person name="Kelly S.H."/>
            <person name="Kube M."/>
            <person name="Levy R."/>
            <person name="Li Z."/>
            <person name="Liu B."/>
            <person name="Liu J."/>
            <person name="Liu W."/>
            <person name="Lu J."/>
            <person name="Maheshwari M."/>
            <person name="Nguyen B.-V."/>
            <person name="Okwuonu G.O."/>
            <person name="Palmeiri A."/>
            <person name="Pasternak S."/>
            <person name="Perez L.M."/>
            <person name="Phelps K.A."/>
            <person name="Plopper F.J."/>
            <person name="Qiang B."/>
            <person name="Raymond C."/>
            <person name="Rodriguez R."/>
            <person name="Saenphimmachak C."/>
            <person name="Santibanez J."/>
            <person name="Shen H."/>
            <person name="Shen Y."/>
            <person name="Subramanian S."/>
            <person name="Tabor P.E."/>
            <person name="Verduzco D."/>
            <person name="Waldron L."/>
            <person name="Wang J."/>
            <person name="Wang J."/>
            <person name="Wang Q."/>
            <person name="Williams G.A."/>
            <person name="Wong G.K.-S."/>
            <person name="Yao Z."/>
            <person name="Zhang J."/>
            <person name="Zhang X."/>
            <person name="Zhao G."/>
            <person name="Zhou J."/>
            <person name="Zhou Y."/>
            <person name="Nelson D."/>
            <person name="Lehrach H."/>
            <person name="Reinhardt R."/>
            <person name="Naylor S.L."/>
            <person name="Yang H."/>
            <person name="Olson M."/>
            <person name="Weinstock G."/>
            <person name="Gibbs R.A."/>
        </authorList>
    </citation>
    <scope>NUCLEOTIDE SEQUENCE [LARGE SCALE GENOMIC DNA]</scope>
</reference>
<reference key="3">
    <citation type="journal article" date="1998" name="Genomics">
        <title>Identification of high-molecular-weight proteins with multiple EGF-like motifs by motif-trap screening.</title>
        <authorList>
            <person name="Nakayama M."/>
            <person name="Nakajima D."/>
            <person name="Nagase T."/>
            <person name="Nomura N."/>
            <person name="Seki N."/>
            <person name="Ohara O."/>
        </authorList>
    </citation>
    <scope>NUCLEOTIDE SEQUENCE [MRNA] OF 1954-3312 (ISOFORM 2)</scope>
    <source>
        <tissue>Brain</tissue>
    </source>
</reference>
<reference key="4">
    <citation type="journal article" date="2008" name="Proc. Natl. Acad. Sci. U.S.A.">
        <title>A quantitative atlas of mitotic phosphorylation.</title>
        <authorList>
            <person name="Dephoure N."/>
            <person name="Zhou C."/>
            <person name="Villen J."/>
            <person name="Beausoleil S.A."/>
            <person name="Bakalarski C.E."/>
            <person name="Elledge S.J."/>
            <person name="Gygi S.P."/>
        </authorList>
    </citation>
    <scope>IDENTIFICATION BY MASS SPECTROMETRY [LARGE SCALE ANALYSIS]</scope>
    <source>
        <tissue>Cervix carcinoma</tissue>
    </source>
</reference>
<reference key="5">
    <citation type="journal article" date="2013" name="J. Med. Genet.">
        <title>Early infantile epileptic encephalopathy associated with a high voltage gated calcium channelopathy.</title>
        <authorList>
            <person name="Edvardson S."/>
            <person name="Oz S."/>
            <person name="Abulhijaa F.A."/>
            <person name="Taher F.B."/>
            <person name="Shaag A."/>
            <person name="Zenvirt S."/>
            <person name="Dascal N."/>
            <person name="Elpeleg O."/>
        </authorList>
    </citation>
    <scope>VARIANT ILE-2630</scope>
</reference>
<reference key="6">
    <citation type="journal article" date="2013" name="PLoS ONE">
        <title>A novel null homozygous mutation confirms CACNA2D2 as a gene mutated in epileptic encephalopathy.</title>
        <authorList>
            <person name="Pippucci T."/>
            <person name="Parmeggiani A."/>
            <person name="Palombo F."/>
            <person name="Maresca A."/>
            <person name="Angius A."/>
            <person name="Crisponi L."/>
            <person name="Cucca F."/>
            <person name="Liguori R."/>
            <person name="Valentino M.L."/>
            <person name="Seri M."/>
            <person name="Carelli V."/>
        </authorList>
    </citation>
    <scope>VARIANT ASP-2136</scope>
</reference>
<reference key="7">
    <citation type="journal article" date="2018" name="Case Rep. Genet.">
        <title>Epileptic encephalopathy and cerebellar atrophy resulting from compound heterozygous CACNA2D2 variants.</title>
        <authorList>
            <person name="Butler K.M."/>
            <person name="Holt P.J."/>
            <person name="Milla S.S."/>
            <person name="da Silva C."/>
            <person name="Alexander J.J."/>
            <person name="Escayg A."/>
        </authorList>
    </citation>
    <scope>VARIANT ARG-1758</scope>
</reference>
<sequence length="3312" mass="358185">MMARRPPWRGLGGRSTPILLLLLLSLFPLSQEELGGGGHQGWDPGLAATTGPRAHIGGGALALCPESSGVREDGGPGLGVREPIFVGLRGRRQSARNSRGPPEQPNEELGIEHGVQPLGSRERETGQGPGSVLYWRPEVSSCGRTGPLQRGSLSPGALSSGVPGSGNSSPLPSDFLIRHHGPKPVSSQRNAGTGSRKRVGTARCCGELWATGSKGQGERATTSGAERTAPRRNCLPGASGSGPELDSAPRTARTAPASGSAPRESRTAPEPAPKRMRSRGLFRCRFLPQRPGPRPPGLPARPEARKVTSANRARFRRAANRHPQFPQYNYQTLVPENEAAGTAVLRVVAQDPDAGEAGRLVYSLAALMNSRSLELFSIDPQSGLIRTAAALDRESMERHYLRVTAQDHGSPRLSATTMVAVTVADRNDHSPVFEQAQYRETLRENVEEGYPILQLRATDGDAPPNANLRYRFVGPPAARAAAAAAFEIDPRSGLISTSGRVDREHMESYELVVEASDQGQEPGPRSATVRVHITVLDENDNAPQFSEKRYVAQVREDVRPHTVVLRVTATDRDKDANGLVHYNIISGNSRGHFAIDSLTGEIQVVAPLDFEAEREYALRIRAQDAGRPPLSNNTGLASIQVVDINDHIPIFVSTPFQVSVLENAPLGHSVIHIQAVDADHGENARLEYSLTGVAPDTPFVINSATGWVSVSGPLDRESVEHYFFGVEARDHGSPPLSASASVTVTVLDVNDNRPEFTMKEYHLRLNEDAAVGTSVVSVTAVDRDANSAISYQITGGNTRNRFAISTQGGVGLVTLALPLDYKQERYFKLVLTASDRALHDHCYVHINITDANTHRPVFQSAHYSVSVNEDRPMGSTIVVISASDDDVGENARITYLLEDNLPQFRIDADSGAITLQAPLDYEDQVTYTLAITARDNGIPQKADTTYVEVMVNDVNDNAPQFVASHYTGLVSEDAPPFTSVLQISATDRDAHANGRVQYTFQNGEDGDGDFTIEPTSGIVRTVRRLDREAVSVYELTAYAVDRGVPPLRTPVSIQVMVQDVNDNAPVFPAEEFEVRVKENSIVGSVVAQITAVDPDEGPNAHIMYQIVEGNIPELFQMDIFSGELTALIDLDYEARQEYVIVVQATSAPLVSRATVHVRLVDQNDNSPVLNNFQILFNNYVSNRSDTFPSGIIGRIPAYDPDVSDHLFYSFERGNELQLLVVNQTSGELRLSRKLDNNRPLVASMLVTVTDGLHSVTAQCVLRVVIITEELLANSLTVRLENMWQERFLSPLLGRFLEGVAAVLATPAEDVFIFNIQNDTDVGGTVLNVSFSALAPRGAGAGAAGPWFSSEELQEQLYVRRAALAARSLLDVLPFDDNVCLREPCENYMKCVSVLRFDSSAPFLASASTLFRPIQPIAGLRCRCPPGFTGDFCETELDLCYSNPCRNGGACARREGGYTCVCRPRFTGEDCELDTEAGRCVPGVCRNGGTCTDAPNGGFRCQCPAGGAFEGPRCEVAARSFPPSSFVMFRGLRQRFHLTLSLSFATVQQSGLLFYNGRLNEKHDFLALELVAGQVRLTYSTGESNTVVSPTVPGGLSDGQWHTVHLRYYNKPRTDALGGAQGPSKDKVAVLSVDDCDVAVALQFGAEIGNYSCAAAGVQTSSKKSLDLTGPLLLGGVPNLPENFPVSHKDFIGCMRDLHIDGRRVDMAAFVANNGTMAGCQAKLHFCDSGPCKNSGFCSERWGSFSCDCPVGFGGKDCQLTMAHPHHFRGNGTLSWNFGSDMAVSVPWYLGLAFRTRATQGVLMQVQAGPHSTLLCQLDRGLLSVTVTRGSGRASHLLLDQVTVSDGRWHDLRLELQEEPGGRRGHHVLMVSLDFSLFQDTMAVGSELQGLKVKQLHVGGLPPGSAEEAPQGLVGCIQGVWLGSTPSGSPALLPPSHRVNAEPGCVVTNACASGPCPPHADCRDLWQTFSCTCQPGYYGPGCVDACLLNPCQNQGSCRHLPGAPHGYTCDCVGGYFGHHCEHRMDQQCPRGWWGSPTCGPCNCDVHKGFDPNCNKTNGQCHCKEFHYRPRGSDSCLPCDCYPVGSTSRSCAPHSGQCPCRPGALGRQCNSCDSPFAEVTASGCRVLYDACPKSLRSGVWWPQTKFGVLATVPCPRGALGAAVRLCDEAQGWLEPDLFNCTSPAFRELSLLLDGLELNKTALDTMEAKKLAQRLREVTGHTDHYFSQDVRVTARLLAHLLAFESHQQGFGLTATQDAHFNENLLWAGSALLAPETGDLWAALGQRAPGGSPGSAGLVRHLEEYAATLARNMELTYLNPMGLVTPNIMLSIDRMEHPSSPRGARRYPRYHSNLFRGQDAWDPHTHVLLPSQSPRPSPSEVLPTSSSIENSTTSSVVPPPAPPEPEPGISIIILLVYRTLGGLLPAQFQAERRGARLPQNPVMNSPVVSVAVFHGRNFLRGILESPISLEFRLLQTANRSKAICVQWDPPGLAEQHGVWTARDCELVHRNGSHARCRCSRTGTFGVLMDASPRERLEGDLELLAVFTHVVVAVSVAALVLTAAILLSLRSLKSNVRGIHANVAAALGVAELLFLLGIHRTHNQLVCTAVAILLHYFFLSTFAWLFVQGLHLYRMQVEPRNVDRGAMRFYHALGWGVPAVLLGLAVGLDPEGYGNPDFCWISVHEPLIWSFAGPVVLVIVMNGTMFLLAARTSCSTGQREAKKTSALTLRSSFLLLLLVSASWLFGLLAVNHSILAFHYLHAGLCGLQGLAVLLLFCVLNADARAAWMPACLGRKAAPEEARPAPGLGPGAYNNTALFEESGLIRITLGASTVSSVSSARSGRTQDQDSQRGRSYLRDNVLVRHGSAADHTDHSLQAHAGPTDLDVAMFHRDAGADSDSDSDLSLEEERSLSIPSSESEDNGRTRGRFQRPLCRAAQSERLLTHPKDVDGNDLLSYWPALGECEAAPCALQTWGSERRLGLDTSKDAANNNQPDPALTSGDETSLGRAQRQRKGILKNRLQYPLVPQTRGAPELSWCRAATLGHRAVPAASYGRIYAGGGTGSLSQPASRYSSREQLDLLLRRQLSRERLEEAPAPVLRPLSRPGSQECMDAAPGRLEPKDRGSTLPRRQPPRDYPGAMAGRFGSRDALDLGAPREWLSTLPPPRRTRDLDPQPPPLPLSPQRQLSRDPLLPSRPLDSLSRSSNSREQLDQVPSRHPSREALGPLPQLLRAREDSVSGPSHGPSTEQLDILSSILASFNSSALSSVQSSSTPLGPHTTATPSATASVLGPSTPRSATSHSISELSPDSEVPRSEGHS</sequence>
<evidence type="ECO:0000250" key="1"/>
<evidence type="ECO:0000250" key="2">
    <source>
        <dbReference type="UniProtKB" id="O88278"/>
    </source>
</evidence>
<evidence type="ECO:0000255" key="3"/>
<evidence type="ECO:0000255" key="4">
    <source>
        <dbReference type="PROSITE-ProRule" id="PRU00043"/>
    </source>
</evidence>
<evidence type="ECO:0000255" key="5">
    <source>
        <dbReference type="PROSITE-ProRule" id="PRU00076"/>
    </source>
</evidence>
<evidence type="ECO:0000255" key="6">
    <source>
        <dbReference type="PROSITE-ProRule" id="PRU00098"/>
    </source>
</evidence>
<evidence type="ECO:0000255" key="7">
    <source>
        <dbReference type="PROSITE-ProRule" id="PRU00122"/>
    </source>
</evidence>
<evidence type="ECO:0000255" key="8">
    <source>
        <dbReference type="PROSITE-ProRule" id="PRU00460"/>
    </source>
</evidence>
<evidence type="ECO:0000256" key="9">
    <source>
        <dbReference type="SAM" id="MobiDB-lite"/>
    </source>
</evidence>
<evidence type="ECO:0000269" key="10">
    <source>
    </source>
</evidence>
<evidence type="ECO:0000269" key="11">
    <source>
    </source>
</evidence>
<evidence type="ECO:0000269" key="12">
    <source>
    </source>
</evidence>
<evidence type="ECO:0000303" key="13">
    <source>
    </source>
</evidence>
<evidence type="ECO:0000305" key="14"/>
<accession>Q9NYQ7</accession>
<accession>O75092</accession>
<name>CELR3_HUMAN</name>
<dbReference type="EMBL" id="AF231023">
    <property type="protein sequence ID" value="AAF61929.1"/>
    <property type="molecule type" value="mRNA"/>
</dbReference>
<dbReference type="EMBL" id="AC121252">
    <property type="status" value="NOT_ANNOTATED_CDS"/>
    <property type="molecule type" value="Genomic_DNA"/>
</dbReference>
<dbReference type="EMBL" id="AB011536">
    <property type="protein sequence ID" value="BAA32464.1"/>
    <property type="molecule type" value="mRNA"/>
</dbReference>
<dbReference type="CCDS" id="CCDS2775.1">
    <molecule id="Q9NYQ7-1"/>
</dbReference>
<dbReference type="PIR" id="T00250">
    <property type="entry name" value="T00250"/>
</dbReference>
<dbReference type="RefSeq" id="NP_001398.2">
    <molecule id="Q9NYQ7-1"/>
    <property type="nucleotide sequence ID" value="NM_001407.3"/>
</dbReference>
<dbReference type="SMR" id="Q9NYQ7"/>
<dbReference type="BioGRID" id="108271">
    <property type="interactions" value="38"/>
</dbReference>
<dbReference type="FunCoup" id="Q9NYQ7">
    <property type="interactions" value="802"/>
</dbReference>
<dbReference type="IntAct" id="Q9NYQ7">
    <property type="interactions" value="44"/>
</dbReference>
<dbReference type="MINT" id="Q9NYQ7"/>
<dbReference type="STRING" id="9606.ENSP00000164024"/>
<dbReference type="GlyCosmos" id="Q9NYQ7">
    <property type="glycosylation" value="16 sites, 1 glycan"/>
</dbReference>
<dbReference type="GlyGen" id="Q9NYQ7">
    <property type="glycosylation" value="24 sites, 3 N-linked glycans (5 sites), 1 O-linked glycan (5 sites)"/>
</dbReference>
<dbReference type="iPTMnet" id="Q9NYQ7"/>
<dbReference type="PhosphoSitePlus" id="Q9NYQ7"/>
<dbReference type="SwissPalm" id="Q9NYQ7"/>
<dbReference type="BioMuta" id="CELSR3"/>
<dbReference type="DMDM" id="229462826"/>
<dbReference type="jPOST" id="Q9NYQ7"/>
<dbReference type="MassIVE" id="Q9NYQ7"/>
<dbReference type="PaxDb" id="9606-ENSP00000164024"/>
<dbReference type="PeptideAtlas" id="Q9NYQ7"/>
<dbReference type="ProteomicsDB" id="83265">
    <molecule id="Q9NYQ7-1"/>
</dbReference>
<dbReference type="ProteomicsDB" id="83266">
    <molecule id="Q9NYQ7-2"/>
</dbReference>
<dbReference type="Antibodypedia" id="13269">
    <property type="antibodies" value="309 antibodies from 33 providers"/>
</dbReference>
<dbReference type="DNASU" id="1951"/>
<dbReference type="Ensembl" id="ENST00000164024.5">
    <molecule id="Q9NYQ7-1"/>
    <property type="protein sequence ID" value="ENSP00000164024.4"/>
    <property type="gene ID" value="ENSG00000008300.17"/>
</dbReference>
<dbReference type="GeneID" id="1951"/>
<dbReference type="KEGG" id="hsa:1951"/>
<dbReference type="MANE-Select" id="ENST00000164024.5">
    <property type="protein sequence ID" value="ENSP00000164024.4"/>
    <property type="RefSeq nucleotide sequence ID" value="NM_001407.3"/>
    <property type="RefSeq protein sequence ID" value="NP_001398.2"/>
</dbReference>
<dbReference type="UCSC" id="uc003cul.4">
    <molecule id="Q9NYQ7-1"/>
    <property type="organism name" value="human"/>
</dbReference>
<dbReference type="AGR" id="HGNC:3230"/>
<dbReference type="CTD" id="1951"/>
<dbReference type="DisGeNET" id="1951"/>
<dbReference type="GeneCards" id="CELSR3"/>
<dbReference type="HGNC" id="HGNC:3230">
    <property type="gene designation" value="CELSR3"/>
</dbReference>
<dbReference type="HPA" id="ENSG00000008300">
    <property type="expression patterns" value="Tissue enhanced (brain, pituitary gland)"/>
</dbReference>
<dbReference type="MalaCards" id="CELSR3"/>
<dbReference type="MIM" id="604264">
    <property type="type" value="gene"/>
</dbReference>
<dbReference type="neXtProt" id="NX_Q9NYQ7"/>
<dbReference type="OpenTargets" id="ENSG00000008300"/>
<dbReference type="PharmGKB" id="PA26395"/>
<dbReference type="VEuPathDB" id="HostDB:ENSG00000008300"/>
<dbReference type="eggNOG" id="KOG4289">
    <property type="taxonomic scope" value="Eukaryota"/>
</dbReference>
<dbReference type="GeneTree" id="ENSGT00940000160077"/>
<dbReference type="HOGENOM" id="CLU_000158_1_0_1"/>
<dbReference type="InParanoid" id="Q9NYQ7"/>
<dbReference type="OMA" id="TEVYTVI"/>
<dbReference type="OrthoDB" id="26203at2759"/>
<dbReference type="PAN-GO" id="Q9NYQ7">
    <property type="GO annotations" value="1 GO annotation based on evolutionary models"/>
</dbReference>
<dbReference type="PhylomeDB" id="Q9NYQ7"/>
<dbReference type="TreeFam" id="TF323983"/>
<dbReference type="PathwayCommons" id="Q9NYQ7"/>
<dbReference type="SignaLink" id="Q9NYQ7"/>
<dbReference type="BioGRID-ORCS" id="1951">
    <property type="hits" value="24 hits in 1153 CRISPR screens"/>
</dbReference>
<dbReference type="ChiTaRS" id="CELSR3">
    <property type="organism name" value="human"/>
</dbReference>
<dbReference type="GeneWiki" id="CELSR3"/>
<dbReference type="GenomeRNAi" id="1951"/>
<dbReference type="Pharos" id="Q9NYQ7">
    <property type="development level" value="Tbio"/>
</dbReference>
<dbReference type="PRO" id="PR:Q9NYQ7"/>
<dbReference type="Proteomes" id="UP000005640">
    <property type="component" value="Chromosome 3"/>
</dbReference>
<dbReference type="RNAct" id="Q9NYQ7">
    <property type="molecule type" value="protein"/>
</dbReference>
<dbReference type="Bgee" id="ENSG00000008300">
    <property type="expression patterns" value="Expressed in right hemisphere of cerebellum and 146 other cell types or tissues"/>
</dbReference>
<dbReference type="GO" id="GO:0016020">
    <property type="term" value="C:membrane"/>
    <property type="evidence" value="ECO:0000304"/>
    <property type="project" value="GDB"/>
</dbReference>
<dbReference type="GO" id="GO:0005886">
    <property type="term" value="C:plasma membrane"/>
    <property type="evidence" value="ECO:0007669"/>
    <property type="project" value="UniProtKB-SubCell"/>
</dbReference>
<dbReference type="GO" id="GO:0005509">
    <property type="term" value="F:calcium ion binding"/>
    <property type="evidence" value="ECO:0007669"/>
    <property type="project" value="InterPro"/>
</dbReference>
<dbReference type="GO" id="GO:0004930">
    <property type="term" value="F:G protein-coupled receptor activity"/>
    <property type="evidence" value="ECO:0000304"/>
    <property type="project" value="GDB"/>
</dbReference>
<dbReference type="GO" id="GO:0098609">
    <property type="term" value="P:cell-cell adhesion"/>
    <property type="evidence" value="ECO:0000318"/>
    <property type="project" value="GO_Central"/>
</dbReference>
<dbReference type="GO" id="GO:0036514">
    <property type="term" value="P:dopaminergic neuron axon guidance"/>
    <property type="evidence" value="ECO:0000250"/>
    <property type="project" value="ARUK-UCL"/>
</dbReference>
<dbReference type="GO" id="GO:0007186">
    <property type="term" value="P:G protein-coupled receptor signaling pathway"/>
    <property type="evidence" value="ECO:0000304"/>
    <property type="project" value="GDB"/>
</dbReference>
<dbReference type="GO" id="GO:0007156">
    <property type="term" value="P:homophilic cell adhesion via plasma membrane adhesion molecules"/>
    <property type="evidence" value="ECO:0007669"/>
    <property type="project" value="InterPro"/>
</dbReference>
<dbReference type="GO" id="GO:0036515">
    <property type="term" value="P:serotonergic neuron axon guidance"/>
    <property type="evidence" value="ECO:0000250"/>
    <property type="project" value="ARUK-UCL"/>
</dbReference>
<dbReference type="GO" id="GO:0060071">
    <property type="term" value="P:Wnt signaling pathway, planar cell polarity pathway"/>
    <property type="evidence" value="ECO:0000303"/>
    <property type="project" value="ParkinsonsUK-UCL"/>
</dbReference>
<dbReference type="CDD" id="cd11304">
    <property type="entry name" value="Cadherin_repeat"/>
    <property type="match status" value="9"/>
</dbReference>
<dbReference type="CDD" id="cd00054">
    <property type="entry name" value="EGF_CA"/>
    <property type="match status" value="5"/>
</dbReference>
<dbReference type="CDD" id="cd00055">
    <property type="entry name" value="EGF_Lam"/>
    <property type="match status" value="2"/>
</dbReference>
<dbReference type="CDD" id="cd00110">
    <property type="entry name" value="LamG"/>
    <property type="match status" value="2"/>
</dbReference>
<dbReference type="FunFam" id="2.10.25.10:FF:000011">
    <property type="entry name" value="Cadherin EGF LAG seven-pass G-type receptor"/>
    <property type="match status" value="1"/>
</dbReference>
<dbReference type="FunFam" id="2.60.40.60:FF:000013">
    <property type="entry name" value="Cadherin EGF LAG seven-pass G-type receptor"/>
    <property type="match status" value="1"/>
</dbReference>
<dbReference type="FunFam" id="4.10.1240.10:FF:000021">
    <property type="entry name" value="Cadherin EGF LAG seven-pass G-type receptor"/>
    <property type="match status" value="1"/>
</dbReference>
<dbReference type="FunFam" id="1.20.1070.10:FF:000108">
    <property type="entry name" value="Cadherin EGF LAG seven-pass G-type receptor 3"/>
    <property type="match status" value="1"/>
</dbReference>
<dbReference type="FunFam" id="2.10.25.10:FF:000089">
    <property type="entry name" value="Cadherin EGF LAG seven-pass G-type receptor 3"/>
    <property type="match status" value="1"/>
</dbReference>
<dbReference type="FunFam" id="2.10.25.10:FF:000286">
    <property type="entry name" value="Cadherin EGF LAG seven-pass G-type receptor 3"/>
    <property type="match status" value="1"/>
</dbReference>
<dbReference type="FunFam" id="2.10.25.10:FF:000311">
    <property type="entry name" value="Cadherin EGF LAG seven-pass G-type receptor 3"/>
    <property type="match status" value="1"/>
</dbReference>
<dbReference type="FunFam" id="2.60.120.200:FF:000074">
    <property type="entry name" value="Cadherin EGF LAG seven-pass G-type receptor 3"/>
    <property type="match status" value="1"/>
</dbReference>
<dbReference type="FunFam" id="2.60.120.200:FF:000084">
    <property type="entry name" value="Cadherin EGF LAG seven-pass G-type receptor 3"/>
    <property type="match status" value="1"/>
</dbReference>
<dbReference type="FunFam" id="2.60.40.60:FF:000010">
    <property type="entry name" value="Cadherin EGF LAG seven-pass G-type receptor 3"/>
    <property type="match status" value="2"/>
</dbReference>
<dbReference type="FunFam" id="2.60.40.60:FF:000023">
    <property type="entry name" value="Cadherin EGF LAG seven-pass G-type receptor 3"/>
    <property type="match status" value="2"/>
</dbReference>
<dbReference type="FunFam" id="2.60.40.60:FF:000029">
    <property type="entry name" value="Cadherin EGF LAG seven-pass G-type receptor 3"/>
    <property type="match status" value="1"/>
</dbReference>
<dbReference type="FunFam" id="2.60.40.60:FF:000038">
    <property type="entry name" value="Cadherin EGF LAG seven-pass G-type receptor 3"/>
    <property type="match status" value="1"/>
</dbReference>
<dbReference type="FunFam" id="2.60.40.60:FF:000040">
    <property type="entry name" value="cadherin EGF LAG seven-pass G-type receptor 3"/>
    <property type="match status" value="1"/>
</dbReference>
<dbReference type="FunFam" id="2.10.25.10:FF:000113">
    <property type="entry name" value="Cadherin, EGF LAG seven-pass G-type receptor 3"/>
    <property type="match status" value="1"/>
</dbReference>
<dbReference type="FunFam" id="2.60.40.60:FF:000044">
    <property type="entry name" value="Cadherin, EGF LAG seven-pass G-type receptor 3"/>
    <property type="match status" value="1"/>
</dbReference>
<dbReference type="Gene3D" id="2.60.120.200">
    <property type="match status" value="2"/>
</dbReference>
<dbReference type="Gene3D" id="2.60.220.50">
    <property type="match status" value="1"/>
</dbReference>
<dbReference type="Gene3D" id="2.60.40.60">
    <property type="entry name" value="Cadherins"/>
    <property type="match status" value="9"/>
</dbReference>
<dbReference type="Gene3D" id="4.10.1240.10">
    <property type="entry name" value="GPCR, family 2, extracellular hormone receptor domain"/>
    <property type="match status" value="1"/>
</dbReference>
<dbReference type="Gene3D" id="2.10.25.10">
    <property type="entry name" value="Laminin"/>
    <property type="match status" value="7"/>
</dbReference>
<dbReference type="Gene3D" id="1.20.1070.10">
    <property type="entry name" value="Rhodopsin 7-helix transmembrane proteins"/>
    <property type="match status" value="1"/>
</dbReference>
<dbReference type="InterPro" id="IPR002126">
    <property type="entry name" value="Cadherin-like_dom"/>
</dbReference>
<dbReference type="InterPro" id="IPR015919">
    <property type="entry name" value="Cadherin-like_sf"/>
</dbReference>
<dbReference type="InterPro" id="IPR056286">
    <property type="entry name" value="Cadherin_CELSR1-3_9th"/>
</dbReference>
<dbReference type="InterPro" id="IPR020894">
    <property type="entry name" value="Cadherin_CS"/>
</dbReference>
<dbReference type="InterPro" id="IPR013320">
    <property type="entry name" value="ConA-like_dom_sf"/>
</dbReference>
<dbReference type="InterPro" id="IPR001881">
    <property type="entry name" value="EGF-like_Ca-bd_dom"/>
</dbReference>
<dbReference type="InterPro" id="IPR000742">
    <property type="entry name" value="EGF-like_dom"/>
</dbReference>
<dbReference type="InterPro" id="IPR057244">
    <property type="entry name" value="GAIN_B"/>
</dbReference>
<dbReference type="InterPro" id="IPR032471">
    <property type="entry name" value="GAIN_dom_N"/>
</dbReference>
<dbReference type="InterPro" id="IPR046338">
    <property type="entry name" value="GAIN_dom_sf"/>
</dbReference>
<dbReference type="InterPro" id="IPR017981">
    <property type="entry name" value="GPCR_2-like_7TM"/>
</dbReference>
<dbReference type="InterPro" id="IPR036445">
    <property type="entry name" value="GPCR_2_extracell_dom_sf"/>
</dbReference>
<dbReference type="InterPro" id="IPR001879">
    <property type="entry name" value="GPCR_2_extracellular_dom"/>
</dbReference>
<dbReference type="InterPro" id="IPR000832">
    <property type="entry name" value="GPCR_2_secretin-like"/>
</dbReference>
<dbReference type="InterPro" id="IPR017983">
    <property type="entry name" value="GPCR_2_secretin-like_CS"/>
</dbReference>
<dbReference type="InterPro" id="IPR000203">
    <property type="entry name" value="GPS"/>
</dbReference>
<dbReference type="InterPro" id="IPR001791">
    <property type="entry name" value="Laminin_G"/>
</dbReference>
<dbReference type="InterPro" id="IPR002049">
    <property type="entry name" value="LE_dom"/>
</dbReference>
<dbReference type="PANTHER" id="PTHR24026:SF38">
    <property type="entry name" value="CADHERIN EGF LAG SEVEN-PASS G-TYPE RECEPTOR 3"/>
    <property type="match status" value="1"/>
</dbReference>
<dbReference type="PANTHER" id="PTHR24026">
    <property type="entry name" value="FAT ATYPICAL CADHERIN-RELATED"/>
    <property type="match status" value="1"/>
</dbReference>
<dbReference type="Pfam" id="PF00002">
    <property type="entry name" value="7tm_2"/>
    <property type="match status" value="1"/>
</dbReference>
<dbReference type="Pfam" id="PF00028">
    <property type="entry name" value="Cadherin"/>
    <property type="match status" value="8"/>
</dbReference>
<dbReference type="Pfam" id="PF23592">
    <property type="entry name" value="Cadherin_CELSR2_9th"/>
    <property type="match status" value="1"/>
</dbReference>
<dbReference type="Pfam" id="PF00008">
    <property type="entry name" value="EGF"/>
    <property type="match status" value="3"/>
</dbReference>
<dbReference type="Pfam" id="PF00053">
    <property type="entry name" value="EGF_laminin"/>
    <property type="match status" value="1"/>
</dbReference>
<dbReference type="Pfam" id="PF16489">
    <property type="entry name" value="GAIN"/>
    <property type="match status" value="1"/>
</dbReference>
<dbReference type="Pfam" id="PF01825">
    <property type="entry name" value="GPS"/>
    <property type="match status" value="1"/>
</dbReference>
<dbReference type="Pfam" id="PF02793">
    <property type="entry name" value="HRM"/>
    <property type="match status" value="1"/>
</dbReference>
<dbReference type="Pfam" id="PF02210">
    <property type="entry name" value="Laminin_G_2"/>
    <property type="match status" value="2"/>
</dbReference>
<dbReference type="PRINTS" id="PR00205">
    <property type="entry name" value="CADHERIN"/>
</dbReference>
<dbReference type="PRINTS" id="PR00249">
    <property type="entry name" value="GPCRSECRETIN"/>
</dbReference>
<dbReference type="SMART" id="SM00112">
    <property type="entry name" value="CA"/>
    <property type="match status" value="9"/>
</dbReference>
<dbReference type="SMART" id="SM00181">
    <property type="entry name" value="EGF"/>
    <property type="match status" value="6"/>
</dbReference>
<dbReference type="SMART" id="SM00179">
    <property type="entry name" value="EGF_CA"/>
    <property type="match status" value="5"/>
</dbReference>
<dbReference type="SMART" id="SM00180">
    <property type="entry name" value="EGF_Lam"/>
    <property type="match status" value="1"/>
</dbReference>
<dbReference type="SMART" id="SM00303">
    <property type="entry name" value="GPS"/>
    <property type="match status" value="1"/>
</dbReference>
<dbReference type="SMART" id="SM00008">
    <property type="entry name" value="HormR"/>
    <property type="match status" value="1"/>
</dbReference>
<dbReference type="SMART" id="SM00282">
    <property type="entry name" value="LamG"/>
    <property type="match status" value="2"/>
</dbReference>
<dbReference type="SUPFAM" id="SSF49313">
    <property type="entry name" value="Cadherin-like"/>
    <property type="match status" value="9"/>
</dbReference>
<dbReference type="SUPFAM" id="SSF49899">
    <property type="entry name" value="Concanavalin A-like lectins/glucanases"/>
    <property type="match status" value="2"/>
</dbReference>
<dbReference type="SUPFAM" id="SSF57196">
    <property type="entry name" value="EGF/Laminin"/>
    <property type="match status" value="4"/>
</dbReference>
<dbReference type="PROSITE" id="PS00010">
    <property type="entry name" value="ASX_HYDROXYL"/>
    <property type="match status" value="1"/>
</dbReference>
<dbReference type="PROSITE" id="PS00232">
    <property type="entry name" value="CADHERIN_1"/>
    <property type="match status" value="7"/>
</dbReference>
<dbReference type="PROSITE" id="PS50268">
    <property type="entry name" value="CADHERIN_2"/>
    <property type="match status" value="8"/>
</dbReference>
<dbReference type="PROSITE" id="PS00022">
    <property type="entry name" value="EGF_1"/>
    <property type="match status" value="6"/>
</dbReference>
<dbReference type="PROSITE" id="PS01186">
    <property type="entry name" value="EGF_2"/>
    <property type="match status" value="4"/>
</dbReference>
<dbReference type="PROSITE" id="PS50026">
    <property type="entry name" value="EGF_3"/>
    <property type="match status" value="6"/>
</dbReference>
<dbReference type="PROSITE" id="PS01248">
    <property type="entry name" value="EGF_LAM_1"/>
    <property type="match status" value="1"/>
</dbReference>
<dbReference type="PROSITE" id="PS50027">
    <property type="entry name" value="EGF_LAM_2"/>
    <property type="match status" value="1"/>
</dbReference>
<dbReference type="PROSITE" id="PS00650">
    <property type="entry name" value="G_PROTEIN_RECEP_F2_2"/>
    <property type="match status" value="1"/>
</dbReference>
<dbReference type="PROSITE" id="PS50227">
    <property type="entry name" value="G_PROTEIN_RECEP_F2_3"/>
    <property type="match status" value="1"/>
</dbReference>
<dbReference type="PROSITE" id="PS50261">
    <property type="entry name" value="G_PROTEIN_RECEP_F2_4"/>
    <property type="match status" value="1"/>
</dbReference>
<dbReference type="PROSITE" id="PS50221">
    <property type="entry name" value="GAIN_B"/>
    <property type="match status" value="1"/>
</dbReference>
<dbReference type="PROSITE" id="PS50025">
    <property type="entry name" value="LAM_G_DOMAIN"/>
    <property type="match status" value="2"/>
</dbReference>
<keyword id="KW-0025">Alternative splicing</keyword>
<keyword id="KW-0106">Calcium</keyword>
<keyword id="KW-1003">Cell membrane</keyword>
<keyword id="KW-0217">Developmental protein</keyword>
<keyword id="KW-1015">Disulfide bond</keyword>
<keyword id="KW-0245">EGF-like domain</keyword>
<keyword id="KW-0297">G-protein coupled receptor</keyword>
<keyword id="KW-0325">Glycoprotein</keyword>
<keyword id="KW-0379">Hydroxylation</keyword>
<keyword id="KW-0424">Laminin EGF-like domain</keyword>
<keyword id="KW-0472">Membrane</keyword>
<keyword id="KW-0597">Phosphoprotein</keyword>
<keyword id="KW-1267">Proteomics identification</keyword>
<keyword id="KW-0675">Receptor</keyword>
<keyword id="KW-1185">Reference proteome</keyword>
<keyword id="KW-0677">Repeat</keyword>
<keyword id="KW-0732">Signal</keyword>
<keyword id="KW-0807">Transducer</keyword>
<keyword id="KW-0812">Transmembrane</keyword>
<keyword id="KW-1133">Transmembrane helix</keyword>
<organism>
    <name type="scientific">Homo sapiens</name>
    <name type="common">Human</name>
    <dbReference type="NCBI Taxonomy" id="9606"/>
    <lineage>
        <taxon>Eukaryota</taxon>
        <taxon>Metazoa</taxon>
        <taxon>Chordata</taxon>
        <taxon>Craniata</taxon>
        <taxon>Vertebrata</taxon>
        <taxon>Euteleostomi</taxon>
        <taxon>Mammalia</taxon>
        <taxon>Eutheria</taxon>
        <taxon>Euarchontoglires</taxon>
        <taxon>Primates</taxon>
        <taxon>Haplorrhini</taxon>
        <taxon>Catarrhini</taxon>
        <taxon>Hominidae</taxon>
        <taxon>Homo</taxon>
    </lineage>
</organism>
<comment type="function">
    <text>Receptor that may have an important role in cell/cell signaling during nervous system formation.</text>
</comment>
<comment type="interaction">
    <interactant intactId="EBI-308417">
        <id>Q9NYQ7</id>
    </interactant>
    <interactant intactId="EBI-389883">
        <id>P16333</id>
        <label>NCK1</label>
    </interactant>
    <organismsDiffer>false</organismsDiffer>
    <experiments>2</experiments>
</comment>
<comment type="subcellular location">
    <subcellularLocation>
        <location>Cell membrane</location>
        <topology>Multi-pass membrane protein</topology>
    </subcellularLocation>
</comment>
<comment type="alternative products">
    <event type="alternative splicing"/>
    <isoform>
        <id>Q9NYQ7-1</id>
        <name>1</name>
        <sequence type="displayed"/>
    </isoform>
    <isoform>
        <id>Q9NYQ7-2</id>
        <name>2</name>
        <sequence type="described" ref="VSP_037125"/>
    </isoform>
</comment>
<comment type="similarity">
    <text evidence="14">Belongs to the G-protein coupled receptor 2 family. LN-TM7 subfamily.</text>
</comment>
<proteinExistence type="evidence at protein level"/>
<protein>
    <recommendedName>
        <fullName>Cadherin EGF LAG seven-pass G-type receptor 3</fullName>
    </recommendedName>
    <alternativeName>
        <fullName>Cadherin family member 11</fullName>
    </alternativeName>
    <alternativeName>
        <fullName>Epidermal growth factor-like protein 1</fullName>
        <shortName>EGF-like protein 1</shortName>
    </alternativeName>
    <alternativeName>
        <fullName>Flamingo homolog 1</fullName>
        <shortName>hFmi1</shortName>
    </alternativeName>
    <alternativeName>
        <fullName>Multiple epidermal growth factor-like domains protein 2</fullName>
        <shortName>Multiple EGF-like domains protein 2</shortName>
    </alternativeName>
</protein>
<feature type="signal peptide" evidence="3">
    <location>
        <begin position="1"/>
        <end position="32"/>
    </location>
</feature>
<feature type="chain" id="PRO_0000012918" description="Cadherin EGF LAG seven-pass G-type receptor 3">
    <location>
        <begin position="33"/>
        <end position="3312"/>
    </location>
</feature>
<feature type="topological domain" description="Extracellular" evidence="3">
    <location>
        <begin position="33"/>
        <end position="2540"/>
    </location>
</feature>
<feature type="transmembrane region" description="Helical; Name=1" evidence="3">
    <location>
        <begin position="2541"/>
        <end position="2561"/>
    </location>
</feature>
<feature type="topological domain" description="Cytoplasmic" evidence="3">
    <location>
        <begin position="2562"/>
        <end position="2572"/>
    </location>
</feature>
<feature type="transmembrane region" description="Helical; Name=2" evidence="3">
    <location>
        <begin position="2573"/>
        <end position="2593"/>
    </location>
</feature>
<feature type="topological domain" description="Extracellular" evidence="3">
    <location>
        <begin position="2594"/>
        <end position="2601"/>
    </location>
</feature>
<feature type="transmembrane region" description="Helical; Name=3" evidence="3">
    <location>
        <begin position="2602"/>
        <end position="2622"/>
    </location>
</feature>
<feature type="topological domain" description="Cytoplasmic" evidence="3">
    <location>
        <begin position="2623"/>
        <end position="2643"/>
    </location>
</feature>
<feature type="transmembrane region" description="Helical; Name=4" evidence="3">
    <location>
        <begin position="2644"/>
        <end position="2664"/>
    </location>
</feature>
<feature type="topological domain" description="Extracellular" evidence="3">
    <location>
        <begin position="2665"/>
        <end position="2681"/>
    </location>
</feature>
<feature type="transmembrane region" description="Helical; Name=5" evidence="3">
    <location>
        <begin position="2682"/>
        <end position="2702"/>
    </location>
</feature>
<feature type="topological domain" description="Cytoplasmic" evidence="3">
    <location>
        <begin position="2703"/>
        <end position="2725"/>
    </location>
</feature>
<feature type="transmembrane region" description="Helical; Name=6" evidence="3">
    <location>
        <begin position="2726"/>
        <end position="2746"/>
    </location>
</feature>
<feature type="topological domain" description="Extracellular" evidence="3">
    <location>
        <begin position="2747"/>
        <end position="2753"/>
    </location>
</feature>
<feature type="transmembrane region" description="Helical; Name=7" evidence="3">
    <location>
        <begin position="2754"/>
        <end position="2774"/>
    </location>
</feature>
<feature type="topological domain" description="Cytoplasmic" evidence="3">
    <location>
        <begin position="2775"/>
        <end position="3312"/>
    </location>
</feature>
<feature type="domain" description="Cadherin 1" evidence="4">
    <location>
        <begin position="326"/>
        <end position="433"/>
    </location>
</feature>
<feature type="domain" description="Cadherin 2" evidence="4">
    <location>
        <begin position="434"/>
        <end position="545"/>
    </location>
</feature>
<feature type="domain" description="Cadherin 3" evidence="4">
    <location>
        <begin position="546"/>
        <end position="651"/>
    </location>
</feature>
<feature type="domain" description="Cadherin 4" evidence="4">
    <location>
        <begin position="652"/>
        <end position="756"/>
    </location>
</feature>
<feature type="domain" description="Cadherin 5" evidence="4">
    <location>
        <begin position="757"/>
        <end position="858"/>
    </location>
</feature>
<feature type="domain" description="Cadherin 6" evidence="4">
    <location>
        <begin position="859"/>
        <end position="961"/>
    </location>
</feature>
<feature type="domain" description="Cadherin 7" evidence="4">
    <location>
        <begin position="962"/>
        <end position="1067"/>
    </location>
</feature>
<feature type="domain" description="Cadherin 8" evidence="4">
    <location>
        <begin position="1068"/>
        <end position="1169"/>
    </location>
</feature>
<feature type="domain" description="Cadherin 9" evidence="4">
    <location>
        <begin position="1170"/>
        <end position="1265"/>
    </location>
</feature>
<feature type="domain" description="EGF-like 1; calcium-binding" evidence="5">
    <location>
        <begin position="1375"/>
        <end position="1433"/>
    </location>
</feature>
<feature type="domain" description="EGF-like 2; calcium-binding" evidence="5">
    <location>
        <begin position="1435"/>
        <end position="1471"/>
    </location>
</feature>
<feature type="domain" description="EGF-like 3; calcium-binding" evidence="5">
    <location>
        <begin position="1475"/>
        <end position="1514"/>
    </location>
</feature>
<feature type="domain" description="Laminin G-like 1" evidence="7">
    <location>
        <begin position="1515"/>
        <end position="1719"/>
    </location>
</feature>
<feature type="domain" description="EGF-like 4; calcium-binding" evidence="5">
    <location>
        <begin position="1722"/>
        <end position="1758"/>
    </location>
</feature>
<feature type="domain" description="Laminin G-like 2" evidence="7">
    <location>
        <begin position="1764"/>
        <end position="1944"/>
    </location>
</feature>
<feature type="domain" description="EGF-like 5; calcium-binding" evidence="5">
    <location>
        <begin position="1946"/>
        <end position="1982"/>
    </location>
</feature>
<feature type="domain" description="EGF-like 6; calcium-binding" evidence="5">
    <location>
        <begin position="1983"/>
        <end position="2020"/>
    </location>
</feature>
<feature type="domain" description="EGF-like 7; calcium-binding" evidence="5">
    <location>
        <begin position="2021"/>
        <end position="2053"/>
    </location>
</feature>
<feature type="domain" description="EGF-like 8; calcium-binding" evidence="5">
    <location>
        <begin position="2055"/>
        <end position="2090"/>
    </location>
</feature>
<feature type="domain" description="Laminin EGF-like" evidence="8">
    <location>
        <begin position="2077"/>
        <end position="2124"/>
    </location>
</feature>
<feature type="domain" description="GAIN-B" evidence="6">
    <location>
        <begin position="2368"/>
        <end position="2530"/>
    </location>
</feature>
<feature type="region of interest" description="Disordered" evidence="9">
    <location>
        <begin position="90"/>
        <end position="112"/>
    </location>
</feature>
<feature type="region of interest" description="Disordered" evidence="9">
    <location>
        <begin position="143"/>
        <end position="199"/>
    </location>
</feature>
<feature type="region of interest" description="Disordered" evidence="9">
    <location>
        <begin position="212"/>
        <end position="306"/>
    </location>
</feature>
<feature type="region of interest" description="Disordered" evidence="9">
    <location>
        <begin position="2361"/>
        <end position="2399"/>
    </location>
</feature>
<feature type="region of interest" description="GPS" evidence="6">
    <location>
        <begin position="2480"/>
        <end position="2530"/>
    </location>
</feature>
<feature type="region of interest" description="Disordered" evidence="9">
    <location>
        <begin position="2888"/>
        <end position="2927"/>
    </location>
</feature>
<feature type="region of interest" description="Disordered" evidence="9">
    <location>
        <begin position="2978"/>
        <end position="3006"/>
    </location>
</feature>
<feature type="region of interest" description="Disordered" evidence="9">
    <location>
        <begin position="3086"/>
        <end position="3243"/>
    </location>
</feature>
<feature type="region of interest" description="Disordered" evidence="9">
    <location>
        <begin position="3256"/>
        <end position="3312"/>
    </location>
</feature>
<feature type="compositionally biased region" description="Low complexity" evidence="9">
    <location>
        <begin position="159"/>
        <end position="173"/>
    </location>
</feature>
<feature type="compositionally biased region" description="Pro residues" evidence="9">
    <location>
        <begin position="290"/>
        <end position="299"/>
    </location>
</feature>
<feature type="compositionally biased region" description="Low complexity" evidence="9">
    <location>
        <begin position="2380"/>
        <end position="2391"/>
    </location>
</feature>
<feature type="compositionally biased region" description="Acidic residues" evidence="9">
    <location>
        <begin position="2890"/>
        <end position="2900"/>
    </location>
</feature>
<feature type="compositionally biased region" description="Low complexity" evidence="9">
    <location>
        <begin position="3175"/>
        <end position="3198"/>
    </location>
</feature>
<feature type="compositionally biased region" description="Low complexity" evidence="9">
    <location>
        <begin position="3256"/>
        <end position="3265"/>
    </location>
</feature>
<feature type="compositionally biased region" description="Low complexity" evidence="9">
    <location>
        <begin position="3272"/>
        <end position="3281"/>
    </location>
</feature>
<feature type="compositionally biased region" description="Polar residues" evidence="9">
    <location>
        <begin position="3287"/>
        <end position="3300"/>
    </location>
</feature>
<feature type="modified residue" description="(3R)-3-hydroxyaspartate" evidence="3">
    <location>
        <position position="1963"/>
    </location>
</feature>
<feature type="modified residue" description="Phosphotyrosine" evidence="2">
    <location>
        <position position="2126"/>
    </location>
</feature>
<feature type="modified residue" description="Phosphotyrosine" evidence="2">
    <location>
        <position position="3051"/>
    </location>
</feature>
<feature type="modified residue" description="Phosphoserine" evidence="2">
    <location>
        <position position="3097"/>
    </location>
</feature>
<feature type="glycosylation site" description="N-linked (GlcNAc...) asparagine" evidence="3">
    <location>
        <position position="632"/>
    </location>
</feature>
<feature type="glycosylation site" description="N-linked (GlcNAc...) asparagine" evidence="3">
    <location>
        <position position="847"/>
    </location>
</feature>
<feature type="glycosylation site" description="N-linked (GlcNAc...) asparagine" evidence="3">
    <location>
        <position position="1182"/>
    </location>
</feature>
<feature type="glycosylation site" description="N-linked (GlcNAc...) asparagine" evidence="3">
    <location>
        <position position="1222"/>
    </location>
</feature>
<feature type="glycosylation site" description="N-linked (GlcNAc...) asparagine" evidence="3">
    <location>
        <position position="1317"/>
    </location>
</feature>
<feature type="glycosylation site" description="N-linked (GlcNAc...) asparagine" evidence="3">
    <location>
        <position position="1327"/>
    </location>
</feature>
<feature type="glycosylation site" description="N-linked (GlcNAc...) asparagine" evidence="3">
    <location>
        <position position="1649"/>
    </location>
</feature>
<feature type="glycosylation site" description="N-linked (GlcNAc...) asparagine" evidence="3">
    <location>
        <position position="1713"/>
    </location>
</feature>
<feature type="glycosylation site" description="N-linked (GlcNAc...) asparagine" evidence="3">
    <location>
        <position position="1770"/>
    </location>
</feature>
<feature type="glycosylation site" description="N-linked (GlcNAc...) asparagine" evidence="3">
    <location>
        <position position="2053"/>
    </location>
</feature>
<feature type="glycosylation site" description="N-linked (GlcNAc...) asparagine" evidence="3">
    <location>
        <position position="2177"/>
    </location>
</feature>
<feature type="glycosylation site" description="N-linked (GlcNAc...) asparagine" evidence="3">
    <location>
        <position position="2196"/>
    </location>
</feature>
<feature type="glycosylation site" description="N-linked (GlcNAc...) asparagine" evidence="3">
    <location>
        <position position="2386"/>
    </location>
</feature>
<feature type="glycosylation site" description="N-linked (GlcNAc...) asparagine" evidence="3">
    <location>
        <position position="2474"/>
    </location>
</feature>
<feature type="glycosylation site" description="N-linked (GlcNAc...) asparagine" evidence="3">
    <location>
        <position position="2506"/>
    </location>
</feature>
<feature type="disulfide bond" evidence="1">
    <location>
        <begin position="1379"/>
        <end position="1390"/>
    </location>
</feature>
<feature type="disulfide bond" evidence="1">
    <location>
        <begin position="1384"/>
        <end position="1421"/>
    </location>
</feature>
<feature type="disulfide bond" evidence="1">
    <location>
        <begin position="1423"/>
        <end position="1432"/>
    </location>
</feature>
<feature type="disulfide bond" evidence="1">
    <location>
        <begin position="1439"/>
        <end position="1450"/>
    </location>
</feature>
<feature type="disulfide bond" evidence="1">
    <location>
        <begin position="1444"/>
        <end position="1459"/>
    </location>
</feature>
<feature type="disulfide bond" evidence="1">
    <location>
        <begin position="1461"/>
        <end position="1470"/>
    </location>
</feature>
<feature type="disulfide bond" evidence="1">
    <location>
        <begin position="1479"/>
        <end position="1490"/>
    </location>
</feature>
<feature type="disulfide bond" evidence="1">
    <location>
        <begin position="1484"/>
        <end position="1500"/>
    </location>
</feature>
<feature type="disulfide bond" evidence="1">
    <location>
        <begin position="1502"/>
        <end position="1513"/>
    </location>
</feature>
<feature type="disulfide bond" evidence="1">
    <location>
        <begin position="1693"/>
        <end position="1719"/>
    </location>
</feature>
<feature type="disulfide bond" evidence="1">
    <location>
        <begin position="1726"/>
        <end position="1737"/>
    </location>
</feature>
<feature type="disulfide bond" evidence="1">
    <location>
        <begin position="1731"/>
        <end position="1746"/>
    </location>
</feature>
<feature type="disulfide bond" evidence="1">
    <location>
        <begin position="1748"/>
        <end position="1757"/>
    </location>
</feature>
<feature type="disulfide bond" evidence="1">
    <location>
        <begin position="1915"/>
        <end position="1944"/>
    </location>
</feature>
<feature type="disulfide bond" evidence="1">
    <location>
        <begin position="1950"/>
        <end position="1961"/>
    </location>
</feature>
<feature type="disulfide bond" evidence="1">
    <location>
        <begin position="1955"/>
        <end position="1970"/>
    </location>
</feature>
<feature type="disulfide bond" evidence="1">
    <location>
        <begin position="1972"/>
        <end position="1981"/>
    </location>
</feature>
<feature type="disulfide bond" evidence="1">
    <location>
        <begin position="1985"/>
        <end position="1996"/>
    </location>
</feature>
<feature type="disulfide bond" evidence="1">
    <location>
        <begin position="1990"/>
        <end position="2008"/>
    </location>
</feature>
<feature type="disulfide bond" evidence="1">
    <location>
        <begin position="2010"/>
        <end position="2019"/>
    </location>
</feature>
<feature type="disulfide bond" evidence="1">
    <location>
        <begin position="2027"/>
        <end position="2040"/>
    </location>
</feature>
<feature type="disulfide bond" evidence="1">
    <location>
        <begin position="2042"/>
        <end position="2052"/>
    </location>
</feature>
<feature type="disulfide bond" evidence="1">
    <location>
        <begin position="2059"/>
        <end position="2074"/>
    </location>
</feature>
<feature type="disulfide bond" evidence="1">
    <location>
        <begin position="2061"/>
        <end position="2077"/>
    </location>
</feature>
<feature type="disulfide bond" evidence="1">
    <location>
        <begin position="2079"/>
        <end position="2089"/>
    </location>
</feature>
<feature type="disulfide bond" evidence="1">
    <location>
        <begin position="2098"/>
        <end position="2107"/>
    </location>
</feature>
<feature type="disulfide bond" evidence="1">
    <location>
        <begin position="2110"/>
        <end position="2122"/>
    </location>
</feature>
<feature type="disulfide bond" evidence="6">
    <location>
        <begin position="2480"/>
        <end position="2512"/>
    </location>
</feature>
<feature type="disulfide bond" evidence="6">
    <location>
        <begin position="2500"/>
        <end position="2514"/>
    </location>
</feature>
<feature type="splice variant" id="VSP_037125" description="In isoform 2." evidence="13">
    <original>G</original>
    <variation>GLRGAG</variation>
    <location>
        <position position="2158"/>
    </location>
</feature>
<feature type="sequence variant" id="VAR_020022" description="In dbSNP:rs3733085.">
    <original>A</original>
    <variation>P</variation>
    <location>
        <position position="157"/>
    </location>
</feature>
<feature type="sequence variant" id="VAR_020023" description="In dbSNP:rs3821875.">
    <original>S</original>
    <variation>T</variation>
    <location>
        <position position="805"/>
    </location>
</feature>
<feature type="sequence variant" id="VAR_055101" description="In dbSNP:rs12107252." evidence="12">
    <original>Q</original>
    <variation>R</variation>
    <location>
        <position position="1758"/>
    </location>
</feature>
<feature type="sequence variant" id="VAR_083108" description="Found in a patient with epileptic encephalopathy; uncertain significance; dbSNP:rs587777163." evidence="11">
    <original>G</original>
    <variation>D</variation>
    <location>
        <position position="2136"/>
    </location>
</feature>
<feature type="sequence variant" id="VAR_083109" description="In dbSNP:rs149614835." evidence="10">
    <original>M</original>
    <variation>I</variation>
    <location>
        <position position="2630"/>
    </location>
</feature>
<feature type="sequence conflict" description="In Ref. 1; AAF61929." evidence="14" ref="1">
    <original>G</original>
    <variation>E</variation>
    <location>
        <position position="13"/>
    </location>
</feature>
<gene>
    <name type="primary">CELSR3</name>
    <name type="synonym">CDHF11</name>
    <name type="synonym">EGFL1</name>
    <name type="synonym">FMI1</name>
    <name type="synonym">KIAA0812</name>
    <name type="synonym">MEGF2</name>
</gene>